<protein>
    <recommendedName>
        <fullName>Small integral membrane protein 13</fullName>
    </recommendedName>
</protein>
<accession>D3ZR35</accession>
<organism>
    <name type="scientific">Rattus norvegicus</name>
    <name type="common">Rat</name>
    <dbReference type="NCBI Taxonomy" id="10116"/>
    <lineage>
        <taxon>Eukaryota</taxon>
        <taxon>Metazoa</taxon>
        <taxon>Chordata</taxon>
        <taxon>Craniata</taxon>
        <taxon>Vertebrata</taxon>
        <taxon>Euteleostomi</taxon>
        <taxon>Mammalia</taxon>
        <taxon>Eutheria</taxon>
        <taxon>Euarchontoglires</taxon>
        <taxon>Glires</taxon>
        <taxon>Rodentia</taxon>
        <taxon>Myomorpha</taxon>
        <taxon>Muroidea</taxon>
        <taxon>Muridae</taxon>
        <taxon>Murinae</taxon>
        <taxon>Rattus</taxon>
    </lineage>
</organism>
<dbReference type="EMBL" id="AABR03108460">
    <property type="status" value="NOT_ANNOTATED_CDS"/>
    <property type="molecule type" value="Genomic_DNA"/>
</dbReference>
<dbReference type="EMBL" id="CH473977">
    <property type="protein sequence ID" value="EDL98218.1"/>
    <property type="molecule type" value="Genomic_DNA"/>
</dbReference>
<dbReference type="RefSeq" id="NP_001129048.1">
    <property type="nucleotide sequence ID" value="NM_001135576.3"/>
</dbReference>
<dbReference type="SMR" id="D3ZR35"/>
<dbReference type="FunCoup" id="D3ZR35">
    <property type="interactions" value="789"/>
</dbReference>
<dbReference type="STRING" id="10116.ENSRNOP00000059626"/>
<dbReference type="PhosphoSitePlus" id="D3ZR35"/>
<dbReference type="PaxDb" id="10116-ENSRNOP00000059626"/>
<dbReference type="PeptideAtlas" id="D3ZR35"/>
<dbReference type="GeneID" id="690806"/>
<dbReference type="KEGG" id="rno:690806"/>
<dbReference type="AGR" id="RGD:1591023"/>
<dbReference type="AGR" id="RGD:402408598"/>
<dbReference type="CTD" id="221710"/>
<dbReference type="RGD" id="1591023">
    <property type="gene designation" value="Smim13"/>
</dbReference>
<dbReference type="eggNOG" id="ENOG502S5IU">
    <property type="taxonomic scope" value="Eukaryota"/>
</dbReference>
<dbReference type="HOGENOM" id="CLU_190096_0_0_1"/>
<dbReference type="InParanoid" id="D3ZR35"/>
<dbReference type="OrthoDB" id="25586at2759"/>
<dbReference type="PhylomeDB" id="D3ZR35"/>
<dbReference type="PRO" id="PR:D3ZR35"/>
<dbReference type="Proteomes" id="UP000002494">
    <property type="component" value="Chromosome 17"/>
</dbReference>
<dbReference type="Proteomes" id="UP000234681">
    <property type="component" value="Chromosome 17"/>
</dbReference>
<dbReference type="Bgee" id="ENSRNOG00000043288">
    <property type="expression patterns" value="Expressed in testis and 18 other cell types or tissues"/>
</dbReference>
<dbReference type="GO" id="GO:0016020">
    <property type="term" value="C:membrane"/>
    <property type="evidence" value="ECO:0007669"/>
    <property type="project" value="UniProtKB-SubCell"/>
</dbReference>
<dbReference type="InterPro" id="IPR031851">
    <property type="entry name" value="DUF4750"/>
</dbReference>
<dbReference type="PANTHER" id="PTHR36877">
    <property type="entry name" value="SMALL INTEGRAL MEMBRANE PROTEIN 13"/>
    <property type="match status" value="1"/>
</dbReference>
<dbReference type="PANTHER" id="PTHR36877:SF1">
    <property type="entry name" value="SMALL INTEGRAL MEMBRANE PROTEIN 13"/>
    <property type="match status" value="1"/>
</dbReference>
<dbReference type="Pfam" id="PF15938">
    <property type="entry name" value="DUF4750"/>
    <property type="match status" value="1"/>
</dbReference>
<evidence type="ECO:0000250" key="1">
    <source>
        <dbReference type="UniProtKB" id="E9Q942"/>
    </source>
</evidence>
<evidence type="ECO:0000255" key="2"/>
<evidence type="ECO:0000256" key="3">
    <source>
        <dbReference type="SAM" id="MobiDB-lite"/>
    </source>
</evidence>
<evidence type="ECO:0000305" key="4"/>
<sequence>MWHNVGLTLLVFVATLLIVLLLMVCGWYFVWHLFLSKFKFLRELVGDTGSQEGDNEQPSGSEAEEDPSASPHKMRSARQRRPPVDDGH</sequence>
<feature type="chain" id="PRO_0000414062" description="Small integral membrane protein 13">
    <location>
        <begin position="1"/>
        <end position="88"/>
    </location>
</feature>
<feature type="transmembrane region" description="Helical" evidence="2">
    <location>
        <begin position="10"/>
        <end position="30"/>
    </location>
</feature>
<feature type="region of interest" description="Disordered" evidence="3">
    <location>
        <begin position="48"/>
        <end position="88"/>
    </location>
</feature>
<feature type="compositionally biased region" description="Polar residues" evidence="3">
    <location>
        <begin position="48"/>
        <end position="60"/>
    </location>
</feature>
<feature type="compositionally biased region" description="Basic residues" evidence="3">
    <location>
        <begin position="72"/>
        <end position="81"/>
    </location>
</feature>
<feature type="modified residue" description="Phosphoserine" evidence="1">
    <location>
        <position position="59"/>
    </location>
</feature>
<feature type="modified residue" description="Phosphoserine" evidence="1">
    <location>
        <position position="61"/>
    </location>
</feature>
<feature type="modified residue" description="Phosphoserine" evidence="1">
    <location>
        <position position="70"/>
    </location>
</feature>
<name>SIM13_RAT</name>
<proteinExistence type="inferred from homology"/>
<keyword id="KW-0472">Membrane</keyword>
<keyword id="KW-0597">Phosphoprotein</keyword>
<keyword id="KW-1185">Reference proteome</keyword>
<keyword id="KW-0812">Transmembrane</keyword>
<keyword id="KW-1133">Transmembrane helix</keyword>
<comment type="subcellular location">
    <subcellularLocation>
        <location evidence="4">Membrane</location>
        <topology evidence="4">Single-pass membrane protein</topology>
    </subcellularLocation>
</comment>
<comment type="similarity">
    <text evidence="4">Belongs to the SMIM13 family.</text>
</comment>
<reference key="1">
    <citation type="journal article" date="2004" name="Nature">
        <title>Genome sequence of the Brown Norway rat yields insights into mammalian evolution.</title>
        <authorList>
            <person name="Gibbs R.A."/>
            <person name="Weinstock G.M."/>
            <person name="Metzker M.L."/>
            <person name="Muzny D.M."/>
            <person name="Sodergren E.J."/>
            <person name="Scherer S."/>
            <person name="Scott G."/>
            <person name="Steffen D."/>
            <person name="Worley K.C."/>
            <person name="Burch P.E."/>
            <person name="Okwuonu G."/>
            <person name="Hines S."/>
            <person name="Lewis L."/>
            <person name="Deramo C."/>
            <person name="Delgado O."/>
            <person name="Dugan-Rocha S."/>
            <person name="Miner G."/>
            <person name="Morgan M."/>
            <person name="Hawes A."/>
            <person name="Gill R."/>
            <person name="Holt R.A."/>
            <person name="Adams M.D."/>
            <person name="Amanatides P.G."/>
            <person name="Baden-Tillson H."/>
            <person name="Barnstead M."/>
            <person name="Chin S."/>
            <person name="Evans C.A."/>
            <person name="Ferriera S."/>
            <person name="Fosler C."/>
            <person name="Glodek A."/>
            <person name="Gu Z."/>
            <person name="Jennings D."/>
            <person name="Kraft C.L."/>
            <person name="Nguyen T."/>
            <person name="Pfannkoch C.M."/>
            <person name="Sitter C."/>
            <person name="Sutton G.G."/>
            <person name="Venter J.C."/>
            <person name="Woodage T."/>
            <person name="Smith D."/>
            <person name="Lee H.-M."/>
            <person name="Gustafson E."/>
            <person name="Cahill P."/>
            <person name="Kana A."/>
            <person name="Doucette-Stamm L."/>
            <person name="Weinstock K."/>
            <person name="Fechtel K."/>
            <person name="Weiss R.B."/>
            <person name="Dunn D.M."/>
            <person name="Green E.D."/>
            <person name="Blakesley R.W."/>
            <person name="Bouffard G.G."/>
            <person name="De Jong P.J."/>
            <person name="Osoegawa K."/>
            <person name="Zhu B."/>
            <person name="Marra M."/>
            <person name="Schein J."/>
            <person name="Bosdet I."/>
            <person name="Fjell C."/>
            <person name="Jones S."/>
            <person name="Krzywinski M."/>
            <person name="Mathewson C."/>
            <person name="Siddiqui A."/>
            <person name="Wye N."/>
            <person name="McPherson J."/>
            <person name="Zhao S."/>
            <person name="Fraser C.M."/>
            <person name="Shetty J."/>
            <person name="Shatsman S."/>
            <person name="Geer K."/>
            <person name="Chen Y."/>
            <person name="Abramzon S."/>
            <person name="Nierman W.C."/>
            <person name="Havlak P.H."/>
            <person name="Chen R."/>
            <person name="Durbin K.J."/>
            <person name="Egan A."/>
            <person name="Ren Y."/>
            <person name="Song X.-Z."/>
            <person name="Li B."/>
            <person name="Liu Y."/>
            <person name="Qin X."/>
            <person name="Cawley S."/>
            <person name="Cooney A.J."/>
            <person name="D'Souza L.M."/>
            <person name="Martin K."/>
            <person name="Wu J.Q."/>
            <person name="Gonzalez-Garay M.L."/>
            <person name="Jackson A.R."/>
            <person name="Kalafus K.J."/>
            <person name="McLeod M.P."/>
            <person name="Milosavljevic A."/>
            <person name="Virk D."/>
            <person name="Volkov A."/>
            <person name="Wheeler D.A."/>
            <person name="Zhang Z."/>
            <person name="Bailey J.A."/>
            <person name="Eichler E.E."/>
            <person name="Tuzun E."/>
            <person name="Birney E."/>
            <person name="Mongin E."/>
            <person name="Ureta-Vidal A."/>
            <person name="Woodwark C."/>
            <person name="Zdobnov E."/>
            <person name="Bork P."/>
            <person name="Suyama M."/>
            <person name="Torrents D."/>
            <person name="Alexandersson M."/>
            <person name="Trask B.J."/>
            <person name="Young J.M."/>
            <person name="Huang H."/>
            <person name="Wang H."/>
            <person name="Xing H."/>
            <person name="Daniels S."/>
            <person name="Gietzen D."/>
            <person name="Schmidt J."/>
            <person name="Stevens K."/>
            <person name="Vitt U."/>
            <person name="Wingrove J."/>
            <person name="Camara F."/>
            <person name="Mar Alba M."/>
            <person name="Abril J.F."/>
            <person name="Guigo R."/>
            <person name="Smit A."/>
            <person name="Dubchak I."/>
            <person name="Rubin E.M."/>
            <person name="Couronne O."/>
            <person name="Poliakov A."/>
            <person name="Huebner N."/>
            <person name="Ganten D."/>
            <person name="Goesele C."/>
            <person name="Hummel O."/>
            <person name="Kreitler T."/>
            <person name="Lee Y.-A."/>
            <person name="Monti J."/>
            <person name="Schulz H."/>
            <person name="Zimdahl H."/>
            <person name="Himmelbauer H."/>
            <person name="Lehrach H."/>
            <person name="Jacob H.J."/>
            <person name="Bromberg S."/>
            <person name="Gullings-Handley J."/>
            <person name="Jensen-Seaman M.I."/>
            <person name="Kwitek A.E."/>
            <person name="Lazar J."/>
            <person name="Pasko D."/>
            <person name="Tonellato P.J."/>
            <person name="Twigger S."/>
            <person name="Ponting C.P."/>
            <person name="Duarte J.M."/>
            <person name="Rice S."/>
            <person name="Goodstadt L."/>
            <person name="Beatson S.A."/>
            <person name="Emes R.D."/>
            <person name="Winter E.E."/>
            <person name="Webber C."/>
            <person name="Brandt P."/>
            <person name="Nyakatura G."/>
            <person name="Adetobi M."/>
            <person name="Chiaromonte F."/>
            <person name="Elnitski L."/>
            <person name="Eswara P."/>
            <person name="Hardison R.C."/>
            <person name="Hou M."/>
            <person name="Kolbe D."/>
            <person name="Makova K."/>
            <person name="Miller W."/>
            <person name="Nekrutenko A."/>
            <person name="Riemer C."/>
            <person name="Schwartz S."/>
            <person name="Taylor J."/>
            <person name="Yang S."/>
            <person name="Zhang Y."/>
            <person name="Lindpaintner K."/>
            <person name="Andrews T.D."/>
            <person name="Caccamo M."/>
            <person name="Clamp M."/>
            <person name="Clarke L."/>
            <person name="Curwen V."/>
            <person name="Durbin R.M."/>
            <person name="Eyras E."/>
            <person name="Searle S.M."/>
            <person name="Cooper G.M."/>
            <person name="Batzoglou S."/>
            <person name="Brudno M."/>
            <person name="Sidow A."/>
            <person name="Stone E.A."/>
            <person name="Payseur B.A."/>
            <person name="Bourque G."/>
            <person name="Lopez-Otin C."/>
            <person name="Puente X.S."/>
            <person name="Chakrabarti K."/>
            <person name="Chatterji S."/>
            <person name="Dewey C."/>
            <person name="Pachter L."/>
            <person name="Bray N."/>
            <person name="Yap V.B."/>
            <person name="Caspi A."/>
            <person name="Tesler G."/>
            <person name="Pevzner P.A."/>
            <person name="Haussler D."/>
            <person name="Roskin K.M."/>
            <person name="Baertsch R."/>
            <person name="Clawson H."/>
            <person name="Furey T.S."/>
            <person name="Hinrichs A.S."/>
            <person name="Karolchik D."/>
            <person name="Kent W.J."/>
            <person name="Rosenbloom K.R."/>
            <person name="Trumbower H."/>
            <person name="Weirauch M."/>
            <person name="Cooper D.N."/>
            <person name="Stenson P.D."/>
            <person name="Ma B."/>
            <person name="Brent M."/>
            <person name="Arumugam M."/>
            <person name="Shteynberg D."/>
            <person name="Copley R.R."/>
            <person name="Taylor M.S."/>
            <person name="Riethman H."/>
            <person name="Mudunuri U."/>
            <person name="Peterson J."/>
            <person name="Guyer M."/>
            <person name="Felsenfeld A."/>
            <person name="Old S."/>
            <person name="Mockrin S."/>
            <person name="Collins F.S."/>
        </authorList>
    </citation>
    <scope>NUCLEOTIDE SEQUENCE [LARGE SCALE GENOMIC DNA]</scope>
    <source>
        <strain>Brown Norway</strain>
    </source>
</reference>
<reference key="2">
    <citation type="submission" date="2005-07" db="EMBL/GenBank/DDBJ databases">
        <authorList>
            <person name="Mural R.J."/>
            <person name="Adams M.D."/>
            <person name="Myers E.W."/>
            <person name="Smith H.O."/>
            <person name="Venter J.C."/>
        </authorList>
    </citation>
    <scope>NUCLEOTIDE SEQUENCE [LARGE SCALE GENOMIC DNA]</scope>
    <source>
        <strain>Brown Norway</strain>
    </source>
</reference>
<gene>
    <name type="primary">Smim13</name>
</gene>